<proteinExistence type="inferred from homology"/>
<protein>
    <recommendedName>
        <fullName evidence="1">Glycerol kinase</fullName>
        <ecNumber evidence="1">2.7.1.30</ecNumber>
    </recommendedName>
    <alternativeName>
        <fullName evidence="1">ATP:glycerol 3-phosphotransferase</fullName>
    </alternativeName>
    <alternativeName>
        <fullName evidence="1">Glycerokinase</fullName>
        <shortName evidence="1">GK</shortName>
    </alternativeName>
</protein>
<evidence type="ECO:0000255" key="1">
    <source>
        <dbReference type="HAMAP-Rule" id="MF_00186"/>
    </source>
</evidence>
<reference key="1">
    <citation type="journal article" date="2011" name="J. Bacteriol.">
        <title>Comparative genomics of 28 Salmonella enterica isolates: evidence for CRISPR-mediated adaptive sublineage evolution.</title>
        <authorList>
            <person name="Fricke W.F."/>
            <person name="Mammel M.K."/>
            <person name="McDermott P.F."/>
            <person name="Tartera C."/>
            <person name="White D.G."/>
            <person name="Leclerc J.E."/>
            <person name="Ravel J."/>
            <person name="Cebula T.A."/>
        </authorList>
    </citation>
    <scope>NUCLEOTIDE SEQUENCE [LARGE SCALE GENOMIC DNA]</scope>
    <source>
        <strain>CVM19633</strain>
    </source>
</reference>
<accession>B4TPU7</accession>
<name>GLPK_SALSV</name>
<feature type="chain" id="PRO_1000098761" description="Glycerol kinase">
    <location>
        <begin position="1"/>
        <end position="502"/>
    </location>
</feature>
<feature type="binding site" evidence="1">
    <location>
        <position position="14"/>
    </location>
    <ligand>
        <name>ADP</name>
        <dbReference type="ChEBI" id="CHEBI:456216"/>
    </ligand>
</feature>
<feature type="binding site" evidence="1">
    <location>
        <position position="14"/>
    </location>
    <ligand>
        <name>ATP</name>
        <dbReference type="ChEBI" id="CHEBI:30616"/>
    </ligand>
</feature>
<feature type="binding site" evidence="1">
    <location>
        <position position="14"/>
    </location>
    <ligand>
        <name>sn-glycerol 3-phosphate</name>
        <dbReference type="ChEBI" id="CHEBI:57597"/>
    </ligand>
</feature>
<feature type="binding site" evidence="1">
    <location>
        <position position="15"/>
    </location>
    <ligand>
        <name>ATP</name>
        <dbReference type="ChEBI" id="CHEBI:30616"/>
    </ligand>
</feature>
<feature type="binding site" evidence="1">
    <location>
        <position position="16"/>
    </location>
    <ligand>
        <name>ATP</name>
        <dbReference type="ChEBI" id="CHEBI:30616"/>
    </ligand>
</feature>
<feature type="binding site" evidence="1">
    <location>
        <position position="18"/>
    </location>
    <ligand>
        <name>ADP</name>
        <dbReference type="ChEBI" id="CHEBI:456216"/>
    </ligand>
</feature>
<feature type="binding site" evidence="1">
    <location>
        <position position="84"/>
    </location>
    <ligand>
        <name>glycerol</name>
        <dbReference type="ChEBI" id="CHEBI:17754"/>
    </ligand>
</feature>
<feature type="binding site" evidence="1">
    <location>
        <position position="84"/>
    </location>
    <ligand>
        <name>sn-glycerol 3-phosphate</name>
        <dbReference type="ChEBI" id="CHEBI:57597"/>
    </ligand>
</feature>
<feature type="binding site" evidence="1">
    <location>
        <position position="85"/>
    </location>
    <ligand>
        <name>glycerol</name>
        <dbReference type="ChEBI" id="CHEBI:17754"/>
    </ligand>
</feature>
<feature type="binding site" evidence="1">
    <location>
        <position position="85"/>
    </location>
    <ligand>
        <name>sn-glycerol 3-phosphate</name>
        <dbReference type="ChEBI" id="CHEBI:57597"/>
    </ligand>
</feature>
<feature type="binding site" evidence="1">
    <location>
        <position position="136"/>
    </location>
    <ligand>
        <name>glycerol</name>
        <dbReference type="ChEBI" id="CHEBI:17754"/>
    </ligand>
</feature>
<feature type="binding site" evidence="1">
    <location>
        <position position="136"/>
    </location>
    <ligand>
        <name>sn-glycerol 3-phosphate</name>
        <dbReference type="ChEBI" id="CHEBI:57597"/>
    </ligand>
</feature>
<feature type="binding site" evidence="1">
    <location>
        <position position="246"/>
    </location>
    <ligand>
        <name>glycerol</name>
        <dbReference type="ChEBI" id="CHEBI:17754"/>
    </ligand>
</feature>
<feature type="binding site" evidence="1">
    <location>
        <position position="246"/>
    </location>
    <ligand>
        <name>sn-glycerol 3-phosphate</name>
        <dbReference type="ChEBI" id="CHEBI:57597"/>
    </ligand>
</feature>
<feature type="binding site" evidence="1">
    <location>
        <position position="247"/>
    </location>
    <ligand>
        <name>glycerol</name>
        <dbReference type="ChEBI" id="CHEBI:17754"/>
    </ligand>
</feature>
<feature type="binding site" evidence="1">
    <location>
        <position position="268"/>
    </location>
    <ligand>
        <name>ADP</name>
        <dbReference type="ChEBI" id="CHEBI:456216"/>
    </ligand>
</feature>
<feature type="binding site" evidence="1">
    <location>
        <position position="268"/>
    </location>
    <ligand>
        <name>ATP</name>
        <dbReference type="ChEBI" id="CHEBI:30616"/>
    </ligand>
</feature>
<feature type="binding site" evidence="1">
    <location>
        <position position="311"/>
    </location>
    <ligand>
        <name>ADP</name>
        <dbReference type="ChEBI" id="CHEBI:456216"/>
    </ligand>
</feature>
<feature type="binding site" evidence="1">
    <location>
        <position position="311"/>
    </location>
    <ligand>
        <name>ATP</name>
        <dbReference type="ChEBI" id="CHEBI:30616"/>
    </ligand>
</feature>
<feature type="binding site" evidence="1">
    <location>
        <position position="315"/>
    </location>
    <ligand>
        <name>ATP</name>
        <dbReference type="ChEBI" id="CHEBI:30616"/>
    </ligand>
</feature>
<feature type="binding site" evidence="1">
    <location>
        <position position="412"/>
    </location>
    <ligand>
        <name>ADP</name>
        <dbReference type="ChEBI" id="CHEBI:456216"/>
    </ligand>
</feature>
<feature type="binding site" evidence="1">
    <location>
        <position position="412"/>
    </location>
    <ligand>
        <name>ATP</name>
        <dbReference type="ChEBI" id="CHEBI:30616"/>
    </ligand>
</feature>
<feature type="binding site" evidence="1">
    <location>
        <position position="416"/>
    </location>
    <ligand>
        <name>ADP</name>
        <dbReference type="ChEBI" id="CHEBI:456216"/>
    </ligand>
</feature>
<sequence length="502" mass="56052">MTEKKYIVALDQGTTSSRAVVMDHDANIVSVSQREFEQIYPKPGWVEHDPMEIWASQSSTLVEVLAKADISSDQIAAIGITNQRETAIVWERETGKPIYNAIVWQCRRTADICEQLKRDGLEDYIRDNTGLVVDPYFSGTKVKWILDHVEGSRERAKRGELLFGTVDTWLIWKMTQGRVHVTDYTNASRTMLFNIHDLDWDDKMLDVLDIPRAMLPQVRKSSEVYGQTNIGGKGGTRIPIAGIAGDQQAALFGQLCVKEGMAKNTYGTGCFMLMNTGEKAVKSENGLLTTIACGPSGEVNYALEGAVFMAGASIQWLRDEMKLISDAFDSEYFATKVKDTNGVYVVPAFTGLGAPYWDPYARGAIFGLTRGVNSNHIIRATLESIAYQTRDVLEAMQADSGIRLHALRVDGGAVANNFLMQFQSDILGTRVERPEVREVTALGAAYLAGLAVGYWQNLDELQEKAVIEREFRPGIETTERNYRYSGWKKAVKRAMAWEEHDK</sequence>
<gene>
    <name evidence="1" type="primary">glpK</name>
    <name type="ordered locus">SeSA_A4302</name>
</gene>
<dbReference type="EC" id="2.7.1.30" evidence="1"/>
<dbReference type="EMBL" id="CP001127">
    <property type="protein sequence ID" value="ACF90443.1"/>
    <property type="molecule type" value="Genomic_DNA"/>
</dbReference>
<dbReference type="RefSeq" id="WP_000136809.1">
    <property type="nucleotide sequence ID" value="NC_011094.1"/>
</dbReference>
<dbReference type="SMR" id="B4TPU7"/>
<dbReference type="KEGG" id="sew:SeSA_A4302"/>
<dbReference type="HOGENOM" id="CLU_009281_2_3_6"/>
<dbReference type="UniPathway" id="UPA00618">
    <property type="reaction ID" value="UER00672"/>
</dbReference>
<dbReference type="Proteomes" id="UP000001865">
    <property type="component" value="Chromosome"/>
</dbReference>
<dbReference type="GO" id="GO:0005829">
    <property type="term" value="C:cytosol"/>
    <property type="evidence" value="ECO:0007669"/>
    <property type="project" value="TreeGrafter"/>
</dbReference>
<dbReference type="GO" id="GO:0005524">
    <property type="term" value="F:ATP binding"/>
    <property type="evidence" value="ECO:0007669"/>
    <property type="project" value="UniProtKB-UniRule"/>
</dbReference>
<dbReference type="GO" id="GO:0004370">
    <property type="term" value="F:glycerol kinase activity"/>
    <property type="evidence" value="ECO:0000250"/>
    <property type="project" value="UniProtKB"/>
</dbReference>
<dbReference type="GO" id="GO:0046872">
    <property type="term" value="F:metal ion binding"/>
    <property type="evidence" value="ECO:0007669"/>
    <property type="project" value="UniProtKB-KW"/>
</dbReference>
<dbReference type="GO" id="GO:0019563">
    <property type="term" value="P:glycerol catabolic process"/>
    <property type="evidence" value="ECO:0007669"/>
    <property type="project" value="UniProtKB-UniRule"/>
</dbReference>
<dbReference type="GO" id="GO:0006071">
    <property type="term" value="P:glycerol metabolic process"/>
    <property type="evidence" value="ECO:0000250"/>
    <property type="project" value="UniProtKB"/>
</dbReference>
<dbReference type="GO" id="GO:0006072">
    <property type="term" value="P:glycerol-3-phosphate metabolic process"/>
    <property type="evidence" value="ECO:0007669"/>
    <property type="project" value="InterPro"/>
</dbReference>
<dbReference type="CDD" id="cd07786">
    <property type="entry name" value="FGGY_EcGK_like"/>
    <property type="match status" value="1"/>
</dbReference>
<dbReference type="FunFam" id="3.30.420.40:FF:000007">
    <property type="entry name" value="Glycerol kinase"/>
    <property type="match status" value="1"/>
</dbReference>
<dbReference type="FunFam" id="3.30.420.40:FF:000008">
    <property type="entry name" value="Glycerol kinase"/>
    <property type="match status" value="1"/>
</dbReference>
<dbReference type="Gene3D" id="3.30.420.40">
    <property type="match status" value="2"/>
</dbReference>
<dbReference type="HAMAP" id="MF_00186">
    <property type="entry name" value="Glycerol_kin"/>
    <property type="match status" value="1"/>
</dbReference>
<dbReference type="InterPro" id="IPR043129">
    <property type="entry name" value="ATPase_NBD"/>
</dbReference>
<dbReference type="InterPro" id="IPR000577">
    <property type="entry name" value="Carb_kinase_FGGY"/>
</dbReference>
<dbReference type="InterPro" id="IPR018483">
    <property type="entry name" value="Carb_kinase_FGGY_CS"/>
</dbReference>
<dbReference type="InterPro" id="IPR018485">
    <property type="entry name" value="FGGY_C"/>
</dbReference>
<dbReference type="InterPro" id="IPR018484">
    <property type="entry name" value="FGGY_N"/>
</dbReference>
<dbReference type="InterPro" id="IPR005999">
    <property type="entry name" value="Glycerol_kin"/>
</dbReference>
<dbReference type="NCBIfam" id="TIGR01311">
    <property type="entry name" value="glycerol_kin"/>
    <property type="match status" value="1"/>
</dbReference>
<dbReference type="NCBIfam" id="NF000756">
    <property type="entry name" value="PRK00047.1"/>
    <property type="match status" value="1"/>
</dbReference>
<dbReference type="PANTHER" id="PTHR10196:SF69">
    <property type="entry name" value="GLYCEROL KINASE"/>
    <property type="match status" value="1"/>
</dbReference>
<dbReference type="PANTHER" id="PTHR10196">
    <property type="entry name" value="SUGAR KINASE"/>
    <property type="match status" value="1"/>
</dbReference>
<dbReference type="Pfam" id="PF02782">
    <property type="entry name" value="FGGY_C"/>
    <property type="match status" value="1"/>
</dbReference>
<dbReference type="Pfam" id="PF00370">
    <property type="entry name" value="FGGY_N"/>
    <property type="match status" value="1"/>
</dbReference>
<dbReference type="PIRSF" id="PIRSF000538">
    <property type="entry name" value="GlpK"/>
    <property type="match status" value="1"/>
</dbReference>
<dbReference type="SUPFAM" id="SSF53067">
    <property type="entry name" value="Actin-like ATPase domain"/>
    <property type="match status" value="2"/>
</dbReference>
<dbReference type="PROSITE" id="PS00933">
    <property type="entry name" value="FGGY_KINASES_1"/>
    <property type="match status" value="1"/>
</dbReference>
<dbReference type="PROSITE" id="PS00445">
    <property type="entry name" value="FGGY_KINASES_2"/>
    <property type="match status" value="1"/>
</dbReference>
<comment type="function">
    <text evidence="1">Key enzyme in the regulation of glycerol uptake and metabolism. Catalyzes the phosphorylation of glycerol to yield sn-glycerol 3-phosphate.</text>
</comment>
<comment type="catalytic activity">
    <reaction evidence="1">
        <text>glycerol + ATP = sn-glycerol 3-phosphate + ADP + H(+)</text>
        <dbReference type="Rhea" id="RHEA:21644"/>
        <dbReference type="ChEBI" id="CHEBI:15378"/>
        <dbReference type="ChEBI" id="CHEBI:17754"/>
        <dbReference type="ChEBI" id="CHEBI:30616"/>
        <dbReference type="ChEBI" id="CHEBI:57597"/>
        <dbReference type="ChEBI" id="CHEBI:456216"/>
        <dbReference type="EC" id="2.7.1.30"/>
    </reaction>
</comment>
<comment type="activity regulation">
    <text evidence="1">Activity of this regulatory enzyme is affected by several metabolites. Allosterically and non-competitively inhibited by fructose 1,6-bisphosphate (FBP) and unphosphorylated phosphocarrier protein EIIA-Glc (III-Glc), an integral component of the bacterial phosphotransferase (PTS) system.</text>
</comment>
<comment type="pathway">
    <text evidence="1">Polyol metabolism; glycerol degradation via glycerol kinase pathway; sn-glycerol 3-phosphate from glycerol: step 1/1.</text>
</comment>
<comment type="subunit">
    <text evidence="1">Homotetramer and homodimer (in equilibrium). Heterodimer with EIIA-Glc. Binds 1 zinc ion per glycerol kinase EIIA-Glc dimer. The zinc ion is important for dimerization.</text>
</comment>
<comment type="similarity">
    <text evidence="1">Belongs to the FGGY kinase family.</text>
</comment>
<organism>
    <name type="scientific">Salmonella schwarzengrund (strain CVM19633)</name>
    <dbReference type="NCBI Taxonomy" id="439843"/>
    <lineage>
        <taxon>Bacteria</taxon>
        <taxon>Pseudomonadati</taxon>
        <taxon>Pseudomonadota</taxon>
        <taxon>Gammaproteobacteria</taxon>
        <taxon>Enterobacterales</taxon>
        <taxon>Enterobacteriaceae</taxon>
        <taxon>Salmonella</taxon>
    </lineage>
</organism>
<keyword id="KW-0021">Allosteric enzyme</keyword>
<keyword id="KW-0067">ATP-binding</keyword>
<keyword id="KW-0319">Glycerol metabolism</keyword>
<keyword id="KW-0418">Kinase</keyword>
<keyword id="KW-0479">Metal-binding</keyword>
<keyword id="KW-0547">Nucleotide-binding</keyword>
<keyword id="KW-0808">Transferase</keyword>
<keyword id="KW-0862">Zinc</keyword>